<accession>Q6ZUK4</accession>
<accession>Q6ZVM0</accession>
<accession>Q8IVN9</accession>
<reference key="1">
    <citation type="journal article" date="2004" name="Nat. Genet.">
        <title>Complete sequencing and characterization of 21,243 full-length human cDNAs.</title>
        <authorList>
            <person name="Ota T."/>
            <person name="Suzuki Y."/>
            <person name="Nishikawa T."/>
            <person name="Otsuki T."/>
            <person name="Sugiyama T."/>
            <person name="Irie R."/>
            <person name="Wakamatsu A."/>
            <person name="Hayashi K."/>
            <person name="Sato H."/>
            <person name="Nagai K."/>
            <person name="Kimura K."/>
            <person name="Makita H."/>
            <person name="Sekine M."/>
            <person name="Obayashi M."/>
            <person name="Nishi T."/>
            <person name="Shibahara T."/>
            <person name="Tanaka T."/>
            <person name="Ishii S."/>
            <person name="Yamamoto J."/>
            <person name="Saito K."/>
            <person name="Kawai Y."/>
            <person name="Isono Y."/>
            <person name="Nakamura Y."/>
            <person name="Nagahari K."/>
            <person name="Murakami K."/>
            <person name="Yasuda T."/>
            <person name="Iwayanagi T."/>
            <person name="Wagatsuma M."/>
            <person name="Shiratori A."/>
            <person name="Sudo H."/>
            <person name="Hosoiri T."/>
            <person name="Kaku Y."/>
            <person name="Kodaira H."/>
            <person name="Kondo H."/>
            <person name="Sugawara M."/>
            <person name="Takahashi M."/>
            <person name="Kanda K."/>
            <person name="Yokoi T."/>
            <person name="Furuya T."/>
            <person name="Kikkawa E."/>
            <person name="Omura Y."/>
            <person name="Abe K."/>
            <person name="Kamihara K."/>
            <person name="Katsuta N."/>
            <person name="Sato K."/>
            <person name="Tanikawa M."/>
            <person name="Yamazaki M."/>
            <person name="Ninomiya K."/>
            <person name="Ishibashi T."/>
            <person name="Yamashita H."/>
            <person name="Murakawa K."/>
            <person name="Fujimori K."/>
            <person name="Tanai H."/>
            <person name="Kimata M."/>
            <person name="Watanabe M."/>
            <person name="Hiraoka S."/>
            <person name="Chiba Y."/>
            <person name="Ishida S."/>
            <person name="Ono Y."/>
            <person name="Takiguchi S."/>
            <person name="Watanabe S."/>
            <person name="Yosida M."/>
            <person name="Hotuta T."/>
            <person name="Kusano J."/>
            <person name="Kanehori K."/>
            <person name="Takahashi-Fujii A."/>
            <person name="Hara H."/>
            <person name="Tanase T.-O."/>
            <person name="Nomura Y."/>
            <person name="Togiya S."/>
            <person name="Komai F."/>
            <person name="Hara R."/>
            <person name="Takeuchi K."/>
            <person name="Arita M."/>
            <person name="Imose N."/>
            <person name="Musashino K."/>
            <person name="Yuuki H."/>
            <person name="Oshima A."/>
            <person name="Sasaki N."/>
            <person name="Aotsuka S."/>
            <person name="Yoshikawa Y."/>
            <person name="Matsunawa H."/>
            <person name="Ichihara T."/>
            <person name="Shiohata N."/>
            <person name="Sano S."/>
            <person name="Moriya S."/>
            <person name="Momiyama H."/>
            <person name="Satoh N."/>
            <person name="Takami S."/>
            <person name="Terashima Y."/>
            <person name="Suzuki O."/>
            <person name="Nakagawa S."/>
            <person name="Senoh A."/>
            <person name="Mizoguchi H."/>
            <person name="Goto Y."/>
            <person name="Shimizu F."/>
            <person name="Wakebe H."/>
            <person name="Hishigaki H."/>
            <person name="Watanabe T."/>
            <person name="Sugiyama A."/>
            <person name="Takemoto M."/>
            <person name="Kawakami B."/>
            <person name="Yamazaki M."/>
            <person name="Watanabe K."/>
            <person name="Kumagai A."/>
            <person name="Itakura S."/>
            <person name="Fukuzumi Y."/>
            <person name="Fujimori Y."/>
            <person name="Komiyama M."/>
            <person name="Tashiro H."/>
            <person name="Tanigami A."/>
            <person name="Fujiwara T."/>
            <person name="Ono T."/>
            <person name="Yamada K."/>
            <person name="Fujii Y."/>
            <person name="Ozaki K."/>
            <person name="Hirao M."/>
            <person name="Ohmori Y."/>
            <person name="Kawabata A."/>
            <person name="Hikiji T."/>
            <person name="Kobatake N."/>
            <person name="Inagaki H."/>
            <person name="Ikema Y."/>
            <person name="Okamoto S."/>
            <person name="Okitani R."/>
            <person name="Kawakami T."/>
            <person name="Noguchi S."/>
            <person name="Itoh T."/>
            <person name="Shigeta K."/>
            <person name="Senba T."/>
            <person name="Matsumura K."/>
            <person name="Nakajima Y."/>
            <person name="Mizuno T."/>
            <person name="Morinaga M."/>
            <person name="Sasaki M."/>
            <person name="Togashi T."/>
            <person name="Oyama M."/>
            <person name="Hata H."/>
            <person name="Watanabe M."/>
            <person name="Komatsu T."/>
            <person name="Mizushima-Sugano J."/>
            <person name="Satoh T."/>
            <person name="Shirai Y."/>
            <person name="Takahashi Y."/>
            <person name="Nakagawa K."/>
            <person name="Okumura K."/>
            <person name="Nagase T."/>
            <person name="Nomura N."/>
            <person name="Kikuchi H."/>
            <person name="Masuho Y."/>
            <person name="Yamashita R."/>
            <person name="Nakai K."/>
            <person name="Yada T."/>
            <person name="Nakamura Y."/>
            <person name="Ohara O."/>
            <person name="Isogai T."/>
            <person name="Sugano S."/>
        </authorList>
    </citation>
    <scope>NUCLEOTIDE SEQUENCE [LARGE SCALE MRNA] (ISOFORM 1)</scope>
    <source>
        <tissue>Uterus</tissue>
    </source>
</reference>
<reference key="2">
    <citation type="journal article" date="2007" name="BMC Genomics">
        <title>The full-ORF clone resource of the German cDNA consortium.</title>
        <authorList>
            <person name="Bechtel S."/>
            <person name="Rosenfelder H."/>
            <person name="Duda A."/>
            <person name="Schmidt C.P."/>
            <person name="Ernst U."/>
            <person name="Wellenreuther R."/>
            <person name="Mehrle A."/>
            <person name="Schuster C."/>
            <person name="Bahr A."/>
            <person name="Bloecker H."/>
            <person name="Heubner D."/>
            <person name="Hoerlein A."/>
            <person name="Michel G."/>
            <person name="Wedler H."/>
            <person name="Koehrer K."/>
            <person name="Ottenwaelder B."/>
            <person name="Poustka A."/>
            <person name="Wiemann S."/>
            <person name="Schupp I."/>
        </authorList>
    </citation>
    <scope>NUCLEOTIDE SEQUENCE [LARGE SCALE MRNA] (ISOFORM 1)</scope>
    <source>
        <tissue>Uterus</tissue>
    </source>
</reference>
<reference key="3">
    <citation type="journal article" date="2004" name="Nature">
        <title>The DNA sequence and comparative analysis of human chromosome 10.</title>
        <authorList>
            <person name="Deloukas P."/>
            <person name="Earthrowl M.E."/>
            <person name="Grafham D.V."/>
            <person name="Rubenfield M."/>
            <person name="French L."/>
            <person name="Steward C.A."/>
            <person name="Sims S.K."/>
            <person name="Jones M.C."/>
            <person name="Searle S."/>
            <person name="Scott C."/>
            <person name="Howe K."/>
            <person name="Hunt S.E."/>
            <person name="Andrews T.D."/>
            <person name="Gilbert J.G.R."/>
            <person name="Swarbreck D."/>
            <person name="Ashurst J.L."/>
            <person name="Taylor A."/>
            <person name="Battles J."/>
            <person name="Bird C.P."/>
            <person name="Ainscough R."/>
            <person name="Almeida J.P."/>
            <person name="Ashwell R.I.S."/>
            <person name="Ambrose K.D."/>
            <person name="Babbage A.K."/>
            <person name="Bagguley C.L."/>
            <person name="Bailey J."/>
            <person name="Banerjee R."/>
            <person name="Bates K."/>
            <person name="Beasley H."/>
            <person name="Bray-Allen S."/>
            <person name="Brown A.J."/>
            <person name="Brown J.Y."/>
            <person name="Burford D.C."/>
            <person name="Burrill W."/>
            <person name="Burton J."/>
            <person name="Cahill P."/>
            <person name="Camire D."/>
            <person name="Carter N.P."/>
            <person name="Chapman J.C."/>
            <person name="Clark S.Y."/>
            <person name="Clarke G."/>
            <person name="Clee C.M."/>
            <person name="Clegg S."/>
            <person name="Corby N."/>
            <person name="Coulson A."/>
            <person name="Dhami P."/>
            <person name="Dutta I."/>
            <person name="Dunn M."/>
            <person name="Faulkner L."/>
            <person name="Frankish A."/>
            <person name="Frankland J.A."/>
            <person name="Garner P."/>
            <person name="Garnett J."/>
            <person name="Gribble S."/>
            <person name="Griffiths C."/>
            <person name="Grocock R."/>
            <person name="Gustafson E."/>
            <person name="Hammond S."/>
            <person name="Harley J.L."/>
            <person name="Hart E."/>
            <person name="Heath P.D."/>
            <person name="Ho T.P."/>
            <person name="Hopkins B."/>
            <person name="Horne J."/>
            <person name="Howden P.J."/>
            <person name="Huckle E."/>
            <person name="Hynds C."/>
            <person name="Johnson C."/>
            <person name="Johnson D."/>
            <person name="Kana A."/>
            <person name="Kay M."/>
            <person name="Kimberley A.M."/>
            <person name="Kershaw J.K."/>
            <person name="Kokkinaki M."/>
            <person name="Laird G.K."/>
            <person name="Lawlor S."/>
            <person name="Lee H.M."/>
            <person name="Leongamornlert D.A."/>
            <person name="Laird G."/>
            <person name="Lloyd C."/>
            <person name="Lloyd D.M."/>
            <person name="Loveland J."/>
            <person name="Lovell J."/>
            <person name="McLaren S."/>
            <person name="McLay K.E."/>
            <person name="McMurray A."/>
            <person name="Mashreghi-Mohammadi M."/>
            <person name="Matthews L."/>
            <person name="Milne S."/>
            <person name="Nickerson T."/>
            <person name="Nguyen M."/>
            <person name="Overton-Larty E."/>
            <person name="Palmer S.A."/>
            <person name="Pearce A.V."/>
            <person name="Peck A.I."/>
            <person name="Pelan S."/>
            <person name="Phillimore B."/>
            <person name="Porter K."/>
            <person name="Rice C.M."/>
            <person name="Rogosin A."/>
            <person name="Ross M.T."/>
            <person name="Sarafidou T."/>
            <person name="Sehra H.K."/>
            <person name="Shownkeen R."/>
            <person name="Skuce C.D."/>
            <person name="Smith M."/>
            <person name="Standring L."/>
            <person name="Sycamore N."/>
            <person name="Tester J."/>
            <person name="Thorpe A."/>
            <person name="Torcasso W."/>
            <person name="Tracey A."/>
            <person name="Tromans A."/>
            <person name="Tsolas J."/>
            <person name="Wall M."/>
            <person name="Walsh J."/>
            <person name="Wang H."/>
            <person name="Weinstock K."/>
            <person name="West A.P."/>
            <person name="Willey D.L."/>
            <person name="Whitehead S.L."/>
            <person name="Wilming L."/>
            <person name="Wray P.W."/>
            <person name="Young L."/>
            <person name="Chen Y."/>
            <person name="Lovering R.C."/>
            <person name="Moschonas N.K."/>
            <person name="Siebert R."/>
            <person name="Fechtel K."/>
            <person name="Bentley D."/>
            <person name="Durbin R.M."/>
            <person name="Hubbard T."/>
            <person name="Doucette-Stamm L."/>
            <person name="Beck S."/>
            <person name="Smith D.R."/>
            <person name="Rogers J."/>
        </authorList>
    </citation>
    <scope>NUCLEOTIDE SEQUENCE [LARGE SCALE GENOMIC DNA]</scope>
</reference>
<reference key="4">
    <citation type="journal article" date="2004" name="Genome Res.">
        <title>The status, quality, and expansion of the NIH full-length cDNA project: the Mammalian Gene Collection (MGC).</title>
        <authorList>
            <consortium name="The MGC Project Team"/>
        </authorList>
    </citation>
    <scope>NUCLEOTIDE SEQUENCE [LARGE SCALE MRNA] (ISOFORM 2)</scope>
    <source>
        <tissue>Brain</tissue>
    </source>
</reference>
<reference key="5">
    <citation type="journal article" date="2009" name="Nat. Biotechnol.">
        <title>Mass-spectrometric identification and relative quantification of N-linked cell surface glycoproteins.</title>
        <authorList>
            <person name="Wollscheid B."/>
            <person name="Bausch-Fluck D."/>
            <person name="Henderson C."/>
            <person name="O'Brien R."/>
            <person name="Bibel M."/>
            <person name="Schiess R."/>
            <person name="Aebersold R."/>
            <person name="Watts J.D."/>
        </authorList>
    </citation>
    <scope>GLYCOSYLATION [LARGE SCALE ANALYSIS] AT ASN-110</scope>
    <source>
        <tissue>Leukemic T-cell</tissue>
    </source>
</reference>
<gene>
    <name type="primary">TMEM26</name>
</gene>
<sequence length="368" mass="41672">MEGLVFLNALATRLLFLLHSLVGVWRVTEVKKEPRYWLLALLNLLLFLETALTLKFKRGRGYKWFSPAIFLYLISIVPSLWLLELHHETQYCSIQAEGTSQNTSRKEDFNQTLTSNEQTSRADDLIETAKVFVNNLSTVCEKVWTLGLHQTFLLMLIIGRWLLPIGGGITRDQLSQLLLMFVGTAADILEFTSETLEEQNVRNSPALVYAILVIWTWSMLQFPLDLAVQNVVCPVSVTERGFPSLFFCQYSADLWNIGISVFIQDGPFLVVRLILMTYFKVINQMLVFFAAKNFLVVVLQLYRLVVLALAVRASLRSQSEGLKGEHGCRAQTSESGPSQRDWQNESKEGLAIPLRGSPVTSDDSHHTP</sequence>
<keyword id="KW-0025">Alternative splicing</keyword>
<keyword id="KW-0325">Glycoprotein</keyword>
<keyword id="KW-0472">Membrane</keyword>
<keyword id="KW-1267">Proteomics identification</keyword>
<keyword id="KW-1185">Reference proteome</keyword>
<keyword id="KW-0812">Transmembrane</keyword>
<keyword id="KW-1133">Transmembrane helix</keyword>
<organism>
    <name type="scientific">Homo sapiens</name>
    <name type="common">Human</name>
    <dbReference type="NCBI Taxonomy" id="9606"/>
    <lineage>
        <taxon>Eukaryota</taxon>
        <taxon>Metazoa</taxon>
        <taxon>Chordata</taxon>
        <taxon>Craniata</taxon>
        <taxon>Vertebrata</taxon>
        <taxon>Euteleostomi</taxon>
        <taxon>Mammalia</taxon>
        <taxon>Eutheria</taxon>
        <taxon>Euarchontoglires</taxon>
        <taxon>Primates</taxon>
        <taxon>Haplorrhini</taxon>
        <taxon>Catarrhini</taxon>
        <taxon>Hominidae</taxon>
        <taxon>Homo</taxon>
    </lineage>
</organism>
<protein>
    <recommendedName>
        <fullName>Transmembrane protein 26</fullName>
    </recommendedName>
</protein>
<evidence type="ECO:0000255" key="1"/>
<evidence type="ECO:0000256" key="2">
    <source>
        <dbReference type="SAM" id="MobiDB-lite"/>
    </source>
</evidence>
<evidence type="ECO:0000269" key="3">
    <source>
    </source>
</evidence>
<evidence type="ECO:0000303" key="4">
    <source>
    </source>
</evidence>
<evidence type="ECO:0000305" key="5"/>
<proteinExistence type="evidence at protein level"/>
<dbReference type="EMBL" id="AK125611">
    <property type="protein sequence ID" value="BAC86218.1"/>
    <property type="molecule type" value="mRNA"/>
</dbReference>
<dbReference type="EMBL" id="CR749606">
    <property type="protein sequence ID" value="CAH18401.1"/>
    <property type="molecule type" value="mRNA"/>
</dbReference>
<dbReference type="EMBL" id="AC068892">
    <property type="status" value="NOT_ANNOTATED_CDS"/>
    <property type="molecule type" value="Genomic_DNA"/>
</dbReference>
<dbReference type="EMBL" id="AL356952">
    <property type="status" value="NOT_ANNOTATED_CDS"/>
    <property type="molecule type" value="Genomic_DNA"/>
</dbReference>
<dbReference type="EMBL" id="BC042872">
    <property type="protein sequence ID" value="AAH42872.1"/>
    <property type="molecule type" value="mRNA"/>
</dbReference>
<dbReference type="CCDS" id="CCDS41530.1">
    <molecule id="Q6ZUK4-1"/>
</dbReference>
<dbReference type="RefSeq" id="NP_848600.2">
    <molecule id="Q6ZUK4-1"/>
    <property type="nucleotide sequence ID" value="NM_178505.8"/>
</dbReference>
<dbReference type="RefSeq" id="XP_011537753.1">
    <molecule id="Q6ZUK4-2"/>
    <property type="nucleotide sequence ID" value="XM_011539451.2"/>
</dbReference>
<dbReference type="RefSeq" id="XP_054220973.1">
    <molecule id="Q6ZUK4-2"/>
    <property type="nucleotide sequence ID" value="XM_054364998.1"/>
</dbReference>
<dbReference type="SMR" id="Q6ZUK4"/>
<dbReference type="FunCoup" id="Q6ZUK4">
    <property type="interactions" value="16"/>
</dbReference>
<dbReference type="STRING" id="9606.ENSP00000382237"/>
<dbReference type="TCDB" id="9.B.422.1.1">
    <property type="family name" value="the transmembrane protein-26 (tmem26) family"/>
</dbReference>
<dbReference type="GlyCosmos" id="Q6ZUK4">
    <property type="glycosylation" value="1 site, No reported glycans"/>
</dbReference>
<dbReference type="GlyGen" id="Q6ZUK4">
    <property type="glycosylation" value="1 site"/>
</dbReference>
<dbReference type="iPTMnet" id="Q6ZUK4"/>
<dbReference type="PhosphoSitePlus" id="Q6ZUK4"/>
<dbReference type="BioMuta" id="TMEM26"/>
<dbReference type="DMDM" id="74749674"/>
<dbReference type="MassIVE" id="Q6ZUK4"/>
<dbReference type="PaxDb" id="9606-ENSP00000382237"/>
<dbReference type="PeptideAtlas" id="Q6ZUK4"/>
<dbReference type="ProteomicsDB" id="68337">
    <molecule id="Q6ZUK4-1"/>
</dbReference>
<dbReference type="ProteomicsDB" id="68338">
    <molecule id="Q6ZUK4-2"/>
</dbReference>
<dbReference type="Antibodypedia" id="3065">
    <property type="antibodies" value="33 antibodies from 12 providers"/>
</dbReference>
<dbReference type="DNASU" id="219623"/>
<dbReference type="Ensembl" id="ENST00000399298.8">
    <molecule id="Q6ZUK4-1"/>
    <property type="protein sequence ID" value="ENSP00000382237.3"/>
    <property type="gene ID" value="ENSG00000196932.12"/>
</dbReference>
<dbReference type="Ensembl" id="ENST00000488505.2">
    <molecule id="Q6ZUK4-2"/>
    <property type="protein sequence ID" value="ENSP00000426071.1"/>
    <property type="gene ID" value="ENSG00000196932.12"/>
</dbReference>
<dbReference type="Ensembl" id="ENST00000503886.5">
    <molecule id="Q6ZUK4-1"/>
    <property type="protein sequence ID" value="ENSP00000425286.1"/>
    <property type="gene ID" value="ENSG00000196932.12"/>
</dbReference>
<dbReference type="GeneID" id="219623"/>
<dbReference type="KEGG" id="hsa:219623"/>
<dbReference type="MANE-Select" id="ENST00000399298.8">
    <property type="protein sequence ID" value="ENSP00000382237.3"/>
    <property type="RefSeq nucleotide sequence ID" value="NM_178505.8"/>
    <property type="RefSeq protein sequence ID" value="NP_848600.2"/>
</dbReference>
<dbReference type="UCSC" id="uc001jlo.3">
    <molecule id="Q6ZUK4-1"/>
    <property type="organism name" value="human"/>
</dbReference>
<dbReference type="AGR" id="HGNC:28550"/>
<dbReference type="CTD" id="219623"/>
<dbReference type="DisGeNET" id="219623"/>
<dbReference type="GeneCards" id="TMEM26"/>
<dbReference type="HGNC" id="HGNC:28550">
    <property type="gene designation" value="TMEM26"/>
</dbReference>
<dbReference type="HPA" id="ENSG00000196932">
    <property type="expression patterns" value="Tissue enhanced (lymphoid)"/>
</dbReference>
<dbReference type="MIM" id="617803">
    <property type="type" value="gene"/>
</dbReference>
<dbReference type="neXtProt" id="NX_Q6ZUK4"/>
<dbReference type="OpenTargets" id="ENSG00000196932"/>
<dbReference type="PharmGKB" id="PA134887276"/>
<dbReference type="VEuPathDB" id="HostDB:ENSG00000196932"/>
<dbReference type="eggNOG" id="KOG4610">
    <property type="taxonomic scope" value="Eukaryota"/>
</dbReference>
<dbReference type="GeneTree" id="ENSGT00390000014794"/>
<dbReference type="HOGENOM" id="CLU_032511_0_0_1"/>
<dbReference type="InParanoid" id="Q6ZUK4"/>
<dbReference type="OMA" id="HHGTQYC"/>
<dbReference type="OrthoDB" id="10042902at2759"/>
<dbReference type="PAN-GO" id="Q6ZUK4">
    <property type="GO annotations" value="0 GO annotations based on evolutionary models"/>
</dbReference>
<dbReference type="PhylomeDB" id="Q6ZUK4"/>
<dbReference type="TreeFam" id="TF314156"/>
<dbReference type="PathwayCommons" id="Q6ZUK4"/>
<dbReference type="BioGRID-ORCS" id="219623">
    <property type="hits" value="12 hits in 1153 CRISPR screens"/>
</dbReference>
<dbReference type="ChiTaRS" id="TMEM26">
    <property type="organism name" value="human"/>
</dbReference>
<dbReference type="GenomeRNAi" id="219623"/>
<dbReference type="Pharos" id="Q6ZUK4">
    <property type="development level" value="Tdark"/>
</dbReference>
<dbReference type="PRO" id="PR:Q6ZUK4"/>
<dbReference type="Proteomes" id="UP000005640">
    <property type="component" value="Chromosome 10"/>
</dbReference>
<dbReference type="RNAct" id="Q6ZUK4">
    <property type="molecule type" value="protein"/>
</dbReference>
<dbReference type="Bgee" id="ENSG00000196932">
    <property type="expression patterns" value="Expressed in adrenal tissue and 96 other cell types or tissues"/>
</dbReference>
<dbReference type="ExpressionAtlas" id="Q6ZUK4">
    <property type="expression patterns" value="baseline and differential"/>
</dbReference>
<dbReference type="GO" id="GO:0016020">
    <property type="term" value="C:membrane"/>
    <property type="evidence" value="ECO:0007669"/>
    <property type="project" value="UniProtKB-SubCell"/>
</dbReference>
<dbReference type="InterPro" id="IPR019169">
    <property type="entry name" value="Transmembrane_26"/>
</dbReference>
<dbReference type="PANTHER" id="PTHR22168">
    <property type="entry name" value="TMEM26 PROTEIN"/>
    <property type="match status" value="1"/>
</dbReference>
<dbReference type="PANTHER" id="PTHR22168:SF3">
    <property type="entry name" value="TRANSMEMBRANE PROTEIN 26"/>
    <property type="match status" value="1"/>
</dbReference>
<dbReference type="Pfam" id="PF09772">
    <property type="entry name" value="Tmem26"/>
    <property type="match status" value="1"/>
</dbReference>
<name>TMM26_HUMAN</name>
<comment type="subcellular location">
    <subcellularLocation>
        <location evidence="5">Membrane</location>
        <topology evidence="5">Multi-pass membrane protein</topology>
    </subcellularLocation>
</comment>
<comment type="alternative products">
    <event type="alternative splicing"/>
    <isoform>
        <id>Q6ZUK4-1</id>
        <name>1</name>
        <sequence type="displayed"/>
    </isoform>
    <isoform>
        <id>Q6ZUK4-2</id>
        <name>2</name>
        <sequence type="described" ref="VSP_019806 VSP_019807"/>
    </isoform>
</comment>
<comment type="miscellaneous">
    <molecule>Isoform 2</molecule>
    <text evidence="5">May be produced at very low levels due to a premature stop codon in the mRNA, leading to nonsense-mediated mRNA decay.</text>
</comment>
<feature type="chain" id="PRO_0000245865" description="Transmembrane protein 26">
    <location>
        <begin position="1"/>
        <end position="368"/>
    </location>
</feature>
<feature type="transmembrane region" description="Helical" evidence="1">
    <location>
        <begin position="4"/>
        <end position="24"/>
    </location>
</feature>
<feature type="transmembrane region" description="Helical" evidence="1">
    <location>
        <begin position="36"/>
        <end position="56"/>
    </location>
</feature>
<feature type="transmembrane region" description="Helical" evidence="1">
    <location>
        <begin position="65"/>
        <end position="85"/>
    </location>
</feature>
<feature type="transmembrane region" description="Helical" evidence="1">
    <location>
        <begin position="150"/>
        <end position="170"/>
    </location>
</feature>
<feature type="transmembrane region" description="Helical" evidence="1">
    <location>
        <begin position="177"/>
        <end position="197"/>
    </location>
</feature>
<feature type="transmembrane region" description="Helical" evidence="1">
    <location>
        <begin position="208"/>
        <end position="228"/>
    </location>
</feature>
<feature type="transmembrane region" description="Helical" evidence="1">
    <location>
        <begin position="257"/>
        <end position="277"/>
    </location>
</feature>
<feature type="transmembrane region" description="Helical" evidence="1">
    <location>
        <begin position="281"/>
        <end position="301"/>
    </location>
</feature>
<feature type="region of interest" description="Disordered" evidence="2">
    <location>
        <begin position="324"/>
        <end position="368"/>
    </location>
</feature>
<feature type="compositionally biased region" description="Polar residues" evidence="2">
    <location>
        <begin position="330"/>
        <end position="341"/>
    </location>
</feature>
<feature type="glycosylation site" description="N-linked (GlcNAc...) asparagine" evidence="3">
    <location>
        <position position="110"/>
    </location>
</feature>
<feature type="splice variant" id="VSP_019806" description="In isoform 2." evidence="4">
    <original>NSPALVYAILVIWTWSMLQFP</original>
    <variation>LCWKNSTNRRHTNPKWQLVLF</variation>
    <location>
        <begin position="203"/>
        <end position="223"/>
    </location>
</feature>
<feature type="splice variant" id="VSP_019807" description="In isoform 2." evidence="4">
    <location>
        <begin position="224"/>
        <end position="368"/>
    </location>
</feature>